<accession>A9NBB7</accession>
<name>KU_COXBR</name>
<organism>
    <name type="scientific">Coxiella burnetii (strain RSA 331 / Henzerling II)</name>
    <dbReference type="NCBI Taxonomy" id="360115"/>
    <lineage>
        <taxon>Bacteria</taxon>
        <taxon>Pseudomonadati</taxon>
        <taxon>Pseudomonadota</taxon>
        <taxon>Gammaproteobacteria</taxon>
        <taxon>Legionellales</taxon>
        <taxon>Coxiellaceae</taxon>
        <taxon>Coxiella</taxon>
    </lineage>
</organism>
<dbReference type="EMBL" id="CP000890">
    <property type="protein sequence ID" value="ABX77812.1"/>
    <property type="molecule type" value="Genomic_DNA"/>
</dbReference>
<dbReference type="RefSeq" id="WP_012220863.1">
    <property type="nucleotide sequence ID" value="NC_010117.1"/>
</dbReference>
<dbReference type="SMR" id="A9NBB7"/>
<dbReference type="KEGG" id="cbs:COXBURSA331_A2134"/>
<dbReference type="HOGENOM" id="CLU_048975_2_0_6"/>
<dbReference type="GO" id="GO:0003690">
    <property type="term" value="F:double-stranded DNA binding"/>
    <property type="evidence" value="ECO:0007669"/>
    <property type="project" value="UniProtKB-UniRule"/>
</dbReference>
<dbReference type="GO" id="GO:0006310">
    <property type="term" value="P:DNA recombination"/>
    <property type="evidence" value="ECO:0007669"/>
    <property type="project" value="UniProtKB-KW"/>
</dbReference>
<dbReference type="GO" id="GO:0006303">
    <property type="term" value="P:double-strand break repair via nonhomologous end joining"/>
    <property type="evidence" value="ECO:0007669"/>
    <property type="project" value="UniProtKB-UniRule"/>
</dbReference>
<dbReference type="CDD" id="cd00789">
    <property type="entry name" value="KU_like"/>
    <property type="match status" value="1"/>
</dbReference>
<dbReference type="FunFam" id="2.40.290.10:FF:000004">
    <property type="entry name" value="Non-homologous end joining protein Ku"/>
    <property type="match status" value="1"/>
</dbReference>
<dbReference type="Gene3D" id="2.40.290.10">
    <property type="match status" value="1"/>
</dbReference>
<dbReference type="HAMAP" id="MF_01875">
    <property type="entry name" value="Prokaryotic_Ku"/>
    <property type="match status" value="1"/>
</dbReference>
<dbReference type="InterPro" id="IPR006164">
    <property type="entry name" value="Ku70/Ku80_beta-barrel_dom"/>
</dbReference>
<dbReference type="InterPro" id="IPR009187">
    <property type="entry name" value="Prok_Ku"/>
</dbReference>
<dbReference type="InterPro" id="IPR016194">
    <property type="entry name" value="SPOC-like_C_dom_sf"/>
</dbReference>
<dbReference type="NCBIfam" id="TIGR02772">
    <property type="entry name" value="Ku_bact"/>
    <property type="match status" value="1"/>
</dbReference>
<dbReference type="PANTHER" id="PTHR41251">
    <property type="entry name" value="NON-HOMOLOGOUS END JOINING PROTEIN KU"/>
    <property type="match status" value="1"/>
</dbReference>
<dbReference type="PANTHER" id="PTHR41251:SF1">
    <property type="entry name" value="NON-HOMOLOGOUS END JOINING PROTEIN KU"/>
    <property type="match status" value="1"/>
</dbReference>
<dbReference type="Pfam" id="PF02735">
    <property type="entry name" value="Ku"/>
    <property type="match status" value="1"/>
</dbReference>
<dbReference type="PIRSF" id="PIRSF006493">
    <property type="entry name" value="Prok_Ku"/>
    <property type="match status" value="1"/>
</dbReference>
<dbReference type="SMART" id="SM00559">
    <property type="entry name" value="Ku78"/>
    <property type="match status" value="1"/>
</dbReference>
<dbReference type="SUPFAM" id="SSF100939">
    <property type="entry name" value="SPOC domain-like"/>
    <property type="match status" value="1"/>
</dbReference>
<reference key="1">
    <citation type="submission" date="2007-11" db="EMBL/GenBank/DDBJ databases">
        <title>Genome sequencing of phylogenetically and phenotypically diverse Coxiella burnetii isolates.</title>
        <authorList>
            <person name="Seshadri R."/>
            <person name="Samuel J.E."/>
        </authorList>
    </citation>
    <scope>NUCLEOTIDE SEQUENCE [LARGE SCALE GENOMIC DNA]</scope>
    <source>
        <strain>RSA 331 / Henzerling II</strain>
    </source>
</reference>
<feature type="chain" id="PRO_0000389181" description="Non-homologous end joining protein Ku">
    <location>
        <begin position="1"/>
        <end position="274"/>
    </location>
</feature>
<feature type="domain" description="Ku" evidence="1">
    <location>
        <begin position="11"/>
        <end position="195"/>
    </location>
</feature>
<evidence type="ECO:0000255" key="1">
    <source>
        <dbReference type="HAMAP-Rule" id="MF_01875"/>
    </source>
</evidence>
<proteinExistence type="inferred from homology"/>
<sequence>MAARPLWKGQITFGLVNVPVSLYPAVGKTEIHFHLLDSRNMARVRYERVNEETGEEVPWNEIVKAYEYNGGDYVIVEEKELKKAAPESTQSIEIESFIPRRELDCVYFDKPYYLVPVKNGEKGYVILREVLKKTKTVGIARIVIRSKQYLAAVFPYQKGIMVNLLRFAQEFRKTDELNLPTQDIKKYKITPKELSIAEQLVNAMLTQWKPEKYHDEFRAKIMKWVEAKIKTGKTISIEKEEAAPVSTNVVDFMQLLKKSIQEKEKTKKHASGSR</sequence>
<protein>
    <recommendedName>
        <fullName evidence="1">Non-homologous end joining protein Ku</fullName>
    </recommendedName>
</protein>
<keyword id="KW-0227">DNA damage</keyword>
<keyword id="KW-0233">DNA recombination</keyword>
<keyword id="KW-0234">DNA repair</keyword>
<keyword id="KW-0238">DNA-binding</keyword>
<gene>
    <name evidence="1" type="primary">ku</name>
    <name type="ordered locus">COXBURSA331_A2134</name>
</gene>
<comment type="function">
    <text evidence="1">With LigD forms a non-homologous end joining (NHEJ) DNA repair enzyme, which repairs dsDNA breaks with reduced fidelity. Binds linear dsDNA with 5'- and 3'- overhangs but not closed circular dsDNA nor ssDNA. Recruits and stimulates the ligase activity of LigD.</text>
</comment>
<comment type="subunit">
    <text evidence="1">Homodimer. Interacts with LigD.</text>
</comment>
<comment type="similarity">
    <text evidence="1">Belongs to the prokaryotic Ku family.</text>
</comment>